<name>ATP6_SALHS</name>
<proteinExistence type="inferred from homology"/>
<sequence>MASENMTPQEYIGHHLNNLQLDLRTFSLVDPQNPPATFWTLNIDSMFFSVVLGLLFLVMFRSVAKKATSGVPGKFQTAIELIVGFVHGSVKDMYHGKSKLIAPLALTIFVWVFLMNLMDLLPIDLLPYIAEHWLGLPATRVVPSADVNITLSMALGVFILILFYSIKMKGIGGFAKELTLQPFNHWAFIPVNLILEGVSLLSKPVSLGLRLFGNMYAGELIFILIAGLLPWWSQWILNVPWAIFHILIITLQAFIFMVLTIVYLSMASEEH</sequence>
<dbReference type="EMBL" id="CP001120">
    <property type="protein sequence ID" value="ACF67936.1"/>
    <property type="molecule type" value="Genomic_DNA"/>
</dbReference>
<dbReference type="RefSeq" id="WP_000135632.1">
    <property type="nucleotide sequence ID" value="NC_011083.1"/>
</dbReference>
<dbReference type="SMR" id="B4TAX8"/>
<dbReference type="KEGG" id="seh:SeHA_C4202"/>
<dbReference type="HOGENOM" id="CLU_041018_1_0_6"/>
<dbReference type="Proteomes" id="UP000001866">
    <property type="component" value="Chromosome"/>
</dbReference>
<dbReference type="GO" id="GO:0005886">
    <property type="term" value="C:plasma membrane"/>
    <property type="evidence" value="ECO:0007669"/>
    <property type="project" value="UniProtKB-SubCell"/>
</dbReference>
<dbReference type="GO" id="GO:0045259">
    <property type="term" value="C:proton-transporting ATP synthase complex"/>
    <property type="evidence" value="ECO:0007669"/>
    <property type="project" value="UniProtKB-KW"/>
</dbReference>
<dbReference type="GO" id="GO:0046933">
    <property type="term" value="F:proton-transporting ATP synthase activity, rotational mechanism"/>
    <property type="evidence" value="ECO:0007669"/>
    <property type="project" value="UniProtKB-UniRule"/>
</dbReference>
<dbReference type="GO" id="GO:0042777">
    <property type="term" value="P:proton motive force-driven plasma membrane ATP synthesis"/>
    <property type="evidence" value="ECO:0007669"/>
    <property type="project" value="TreeGrafter"/>
</dbReference>
<dbReference type="CDD" id="cd00310">
    <property type="entry name" value="ATP-synt_Fo_a_6"/>
    <property type="match status" value="1"/>
</dbReference>
<dbReference type="FunFam" id="1.20.120.220:FF:000002">
    <property type="entry name" value="ATP synthase subunit a"/>
    <property type="match status" value="1"/>
</dbReference>
<dbReference type="Gene3D" id="1.20.120.220">
    <property type="entry name" value="ATP synthase, F0 complex, subunit A"/>
    <property type="match status" value="1"/>
</dbReference>
<dbReference type="HAMAP" id="MF_01393">
    <property type="entry name" value="ATP_synth_a_bact"/>
    <property type="match status" value="1"/>
</dbReference>
<dbReference type="InterPro" id="IPR045082">
    <property type="entry name" value="ATP_syn_F0_a_bact/chloroplast"/>
</dbReference>
<dbReference type="InterPro" id="IPR000568">
    <property type="entry name" value="ATP_synth_F0_asu"/>
</dbReference>
<dbReference type="InterPro" id="IPR023011">
    <property type="entry name" value="ATP_synth_F0_asu_AS"/>
</dbReference>
<dbReference type="InterPro" id="IPR035908">
    <property type="entry name" value="F0_ATP_A_sf"/>
</dbReference>
<dbReference type="NCBIfam" id="TIGR01131">
    <property type="entry name" value="ATP_synt_6_or_A"/>
    <property type="match status" value="1"/>
</dbReference>
<dbReference type="NCBIfam" id="NF004477">
    <property type="entry name" value="PRK05815.1-1"/>
    <property type="match status" value="1"/>
</dbReference>
<dbReference type="PANTHER" id="PTHR42823">
    <property type="entry name" value="ATP SYNTHASE SUBUNIT A, CHLOROPLASTIC"/>
    <property type="match status" value="1"/>
</dbReference>
<dbReference type="PANTHER" id="PTHR42823:SF3">
    <property type="entry name" value="ATP SYNTHASE SUBUNIT A, CHLOROPLASTIC"/>
    <property type="match status" value="1"/>
</dbReference>
<dbReference type="Pfam" id="PF00119">
    <property type="entry name" value="ATP-synt_A"/>
    <property type="match status" value="1"/>
</dbReference>
<dbReference type="PRINTS" id="PR00123">
    <property type="entry name" value="ATPASEA"/>
</dbReference>
<dbReference type="SUPFAM" id="SSF81336">
    <property type="entry name" value="F1F0 ATP synthase subunit A"/>
    <property type="match status" value="1"/>
</dbReference>
<dbReference type="PROSITE" id="PS00449">
    <property type="entry name" value="ATPASE_A"/>
    <property type="match status" value="1"/>
</dbReference>
<keyword id="KW-0066">ATP synthesis</keyword>
<keyword id="KW-0997">Cell inner membrane</keyword>
<keyword id="KW-1003">Cell membrane</keyword>
<keyword id="KW-0138">CF(0)</keyword>
<keyword id="KW-0375">Hydrogen ion transport</keyword>
<keyword id="KW-0406">Ion transport</keyword>
<keyword id="KW-0472">Membrane</keyword>
<keyword id="KW-0812">Transmembrane</keyword>
<keyword id="KW-1133">Transmembrane helix</keyword>
<keyword id="KW-0813">Transport</keyword>
<gene>
    <name evidence="1" type="primary">atpB</name>
    <name type="ordered locus">SeHA_C4202</name>
</gene>
<accession>B4TAX8</accession>
<evidence type="ECO:0000255" key="1">
    <source>
        <dbReference type="HAMAP-Rule" id="MF_01393"/>
    </source>
</evidence>
<feature type="chain" id="PRO_0000362438" description="ATP synthase subunit a">
    <location>
        <begin position="1"/>
        <end position="271"/>
    </location>
</feature>
<feature type="transmembrane region" description="Helical" evidence="1">
    <location>
        <begin position="38"/>
        <end position="58"/>
    </location>
</feature>
<feature type="transmembrane region" description="Helical" evidence="1">
    <location>
        <begin position="100"/>
        <end position="120"/>
    </location>
</feature>
<feature type="transmembrane region" description="Helical" evidence="1">
    <location>
        <begin position="146"/>
        <end position="166"/>
    </location>
</feature>
<feature type="transmembrane region" description="Helical" evidence="1">
    <location>
        <begin position="220"/>
        <end position="240"/>
    </location>
</feature>
<feature type="transmembrane region" description="Helical" evidence="1">
    <location>
        <begin position="242"/>
        <end position="262"/>
    </location>
</feature>
<protein>
    <recommendedName>
        <fullName evidence="1">ATP synthase subunit a</fullName>
    </recommendedName>
    <alternativeName>
        <fullName evidence="1">ATP synthase F0 sector subunit a</fullName>
    </alternativeName>
    <alternativeName>
        <fullName evidence="1">F-ATPase subunit 6</fullName>
    </alternativeName>
</protein>
<organism>
    <name type="scientific">Salmonella heidelberg (strain SL476)</name>
    <dbReference type="NCBI Taxonomy" id="454169"/>
    <lineage>
        <taxon>Bacteria</taxon>
        <taxon>Pseudomonadati</taxon>
        <taxon>Pseudomonadota</taxon>
        <taxon>Gammaproteobacteria</taxon>
        <taxon>Enterobacterales</taxon>
        <taxon>Enterobacteriaceae</taxon>
        <taxon>Salmonella</taxon>
    </lineage>
</organism>
<reference key="1">
    <citation type="journal article" date="2011" name="J. Bacteriol.">
        <title>Comparative genomics of 28 Salmonella enterica isolates: evidence for CRISPR-mediated adaptive sublineage evolution.</title>
        <authorList>
            <person name="Fricke W.F."/>
            <person name="Mammel M.K."/>
            <person name="McDermott P.F."/>
            <person name="Tartera C."/>
            <person name="White D.G."/>
            <person name="Leclerc J.E."/>
            <person name="Ravel J."/>
            <person name="Cebula T.A."/>
        </authorList>
    </citation>
    <scope>NUCLEOTIDE SEQUENCE [LARGE SCALE GENOMIC DNA]</scope>
    <source>
        <strain>SL476</strain>
    </source>
</reference>
<comment type="function">
    <text evidence="1">Key component of the proton channel; it plays a direct role in the translocation of protons across the membrane.</text>
</comment>
<comment type="subunit">
    <text evidence="1">F-type ATPases have 2 components, CF(1) - the catalytic core - and CF(0) - the membrane proton channel. CF(1) has five subunits: alpha(3), beta(3), gamma(1), delta(1), epsilon(1). CF(0) has three main subunits: a(1), b(2) and c(9-12). The alpha and beta chains form an alternating ring which encloses part of the gamma chain. CF(1) is attached to CF(0) by a central stalk formed by the gamma and epsilon chains, while a peripheral stalk is formed by the delta and b chains.</text>
</comment>
<comment type="subcellular location">
    <subcellularLocation>
        <location evidence="1">Cell inner membrane</location>
        <topology evidence="1">Multi-pass membrane protein</topology>
    </subcellularLocation>
</comment>
<comment type="similarity">
    <text evidence="1">Belongs to the ATPase A chain family.</text>
</comment>